<dbReference type="EMBL" id="AL731693">
    <property type="protein sequence ID" value="CAM46055.1"/>
    <property type="molecule type" value="Genomic_DNA"/>
</dbReference>
<dbReference type="EMBL" id="BC137616">
    <property type="protein sequence ID" value="AAI37617.1"/>
    <property type="molecule type" value="mRNA"/>
</dbReference>
<dbReference type="EMBL" id="BC137619">
    <property type="protein sequence ID" value="AAI37620.1"/>
    <property type="molecule type" value="mRNA"/>
</dbReference>
<dbReference type="EMBL" id="BC060135">
    <property type="status" value="NOT_ANNOTATED_CDS"/>
    <property type="molecule type" value="mRNA"/>
</dbReference>
<dbReference type="CCDS" id="CCDS41001.1"/>
<dbReference type="RefSeq" id="NP_001074604.1">
    <property type="nucleotide sequence ID" value="NM_001081135.3"/>
</dbReference>
<dbReference type="RefSeq" id="NP_001289957.1">
    <property type="nucleotide sequence ID" value="NM_001303028.2"/>
</dbReference>
<dbReference type="RefSeq" id="XP_006527987.1">
    <property type="nucleotide sequence ID" value="XM_006527924.5"/>
</dbReference>
<dbReference type="RefSeq" id="XP_006527988.1">
    <property type="nucleotide sequence ID" value="XM_006527925.5"/>
</dbReference>
<dbReference type="RefSeq" id="XP_006527989.1">
    <property type="nucleotide sequence ID" value="XM_006527926.4"/>
</dbReference>
<dbReference type="RefSeq" id="XP_006527990.1">
    <property type="nucleotide sequence ID" value="XM_006527927.5"/>
</dbReference>
<dbReference type="SMR" id="Q6PAQ9"/>
<dbReference type="FunCoup" id="Q6PAQ9">
    <property type="interactions" value="543"/>
</dbReference>
<dbReference type="STRING" id="10090.ENSMUSP00000038947"/>
<dbReference type="iPTMnet" id="Q6PAQ9"/>
<dbReference type="PhosphoSitePlus" id="Q6PAQ9"/>
<dbReference type="SwissPalm" id="Q6PAQ9"/>
<dbReference type="PaxDb" id="10090-ENSMUSP00000038947"/>
<dbReference type="ProteomicsDB" id="259128"/>
<dbReference type="Antibodypedia" id="30695">
    <property type="antibodies" value="122 antibodies from 21 providers"/>
</dbReference>
<dbReference type="Ensembl" id="ENSMUST00000048790.7">
    <property type="protein sequence ID" value="ENSMUSP00000038947.7"/>
    <property type="gene ID" value="ENSMUSG00000033361.14"/>
</dbReference>
<dbReference type="Ensembl" id="ENSMUST00000170096.8">
    <property type="protein sequence ID" value="ENSMUSP00000128073.2"/>
    <property type="gene ID" value="ENSMUSG00000033361.14"/>
</dbReference>
<dbReference type="GeneID" id="208748"/>
<dbReference type="KEGG" id="mmu:208748"/>
<dbReference type="UCSC" id="uc009tkh.2">
    <property type="organism name" value="mouse"/>
</dbReference>
<dbReference type="AGR" id="MGI:2685214"/>
<dbReference type="CTD" id="79057"/>
<dbReference type="MGI" id="MGI:2685214">
    <property type="gene designation" value="Prrg3"/>
</dbReference>
<dbReference type="VEuPathDB" id="HostDB:ENSMUSG00000033361"/>
<dbReference type="eggNOG" id="ENOG502RXJN">
    <property type="taxonomic scope" value="Eukaryota"/>
</dbReference>
<dbReference type="GeneTree" id="ENSGT00940000160946"/>
<dbReference type="HOGENOM" id="CLU_103591_0_0_1"/>
<dbReference type="InParanoid" id="Q6PAQ9"/>
<dbReference type="OMA" id="MVYRETS"/>
<dbReference type="OrthoDB" id="9379732at2759"/>
<dbReference type="PhylomeDB" id="Q6PAQ9"/>
<dbReference type="TreeFam" id="TF332123"/>
<dbReference type="BioGRID-ORCS" id="208748">
    <property type="hits" value="2 hits in 76 CRISPR screens"/>
</dbReference>
<dbReference type="ChiTaRS" id="Prrg3">
    <property type="organism name" value="mouse"/>
</dbReference>
<dbReference type="PRO" id="PR:Q6PAQ9"/>
<dbReference type="Proteomes" id="UP000000589">
    <property type="component" value="Chromosome X"/>
</dbReference>
<dbReference type="RNAct" id="Q6PAQ9">
    <property type="molecule type" value="protein"/>
</dbReference>
<dbReference type="Bgee" id="ENSMUSG00000033361">
    <property type="expression patterns" value="Expressed in sciatic nerve and 202 other cell types or tissues"/>
</dbReference>
<dbReference type="ExpressionAtlas" id="Q6PAQ9">
    <property type="expression patterns" value="baseline and differential"/>
</dbReference>
<dbReference type="GO" id="GO:0005576">
    <property type="term" value="C:extracellular region"/>
    <property type="evidence" value="ECO:0007669"/>
    <property type="project" value="InterPro"/>
</dbReference>
<dbReference type="GO" id="GO:0016020">
    <property type="term" value="C:membrane"/>
    <property type="evidence" value="ECO:0007669"/>
    <property type="project" value="UniProtKB-SubCell"/>
</dbReference>
<dbReference type="GO" id="GO:0005509">
    <property type="term" value="F:calcium ion binding"/>
    <property type="evidence" value="ECO:0007669"/>
    <property type="project" value="InterPro"/>
</dbReference>
<dbReference type="FunFam" id="4.10.740.10:FF:000001">
    <property type="entry name" value="vitamin K-dependent protein S"/>
    <property type="match status" value="1"/>
</dbReference>
<dbReference type="Gene3D" id="4.10.740.10">
    <property type="entry name" value="Coagulation Factor IX"/>
    <property type="match status" value="1"/>
</dbReference>
<dbReference type="InterPro" id="IPR017857">
    <property type="entry name" value="Coagulation_fac-like_Gla_dom"/>
</dbReference>
<dbReference type="InterPro" id="IPR035972">
    <property type="entry name" value="GLA-like_dom_SF"/>
</dbReference>
<dbReference type="InterPro" id="IPR000294">
    <property type="entry name" value="GLA_domain"/>
</dbReference>
<dbReference type="InterPro" id="IPR050442">
    <property type="entry name" value="Peptidase_S1_coag_factors"/>
</dbReference>
<dbReference type="PANTHER" id="PTHR24278">
    <property type="entry name" value="COAGULATION FACTOR"/>
    <property type="match status" value="1"/>
</dbReference>
<dbReference type="PANTHER" id="PTHR24278:SF39">
    <property type="entry name" value="TRANSMEMBRANE GAMMA-CARBOXYGLUTAMIC ACID PROTEIN 3"/>
    <property type="match status" value="1"/>
</dbReference>
<dbReference type="Pfam" id="PF00594">
    <property type="entry name" value="Gla"/>
    <property type="match status" value="1"/>
</dbReference>
<dbReference type="PRINTS" id="PR00001">
    <property type="entry name" value="GLABLOOD"/>
</dbReference>
<dbReference type="SMART" id="SM00069">
    <property type="entry name" value="GLA"/>
    <property type="match status" value="1"/>
</dbReference>
<dbReference type="SUPFAM" id="SSF57630">
    <property type="entry name" value="GLA-domain"/>
    <property type="match status" value="1"/>
</dbReference>
<dbReference type="PROSITE" id="PS00011">
    <property type="entry name" value="GLA_1"/>
    <property type="match status" value="1"/>
</dbReference>
<dbReference type="PROSITE" id="PS50998">
    <property type="entry name" value="GLA_2"/>
    <property type="match status" value="1"/>
</dbReference>
<evidence type="ECO:0000250" key="1"/>
<evidence type="ECO:0000255" key="2"/>
<evidence type="ECO:0000255" key="3">
    <source>
        <dbReference type="PROSITE-ProRule" id="PRU00463"/>
    </source>
</evidence>
<evidence type="ECO:0000256" key="4">
    <source>
        <dbReference type="SAM" id="MobiDB-lite"/>
    </source>
</evidence>
<evidence type="ECO:0000305" key="5"/>
<keyword id="KW-1015">Disulfide bond</keyword>
<keyword id="KW-0301">Gamma-carboxyglutamic acid</keyword>
<keyword id="KW-0472">Membrane</keyword>
<keyword id="KW-1185">Reference proteome</keyword>
<keyword id="KW-0812">Transmembrane</keyword>
<keyword id="KW-1133">Transmembrane helix</keyword>
<feature type="propeptide" id="PRO_0000022549" evidence="2">
    <location>
        <begin position="1"/>
        <end position="19"/>
    </location>
</feature>
<feature type="chain" id="PRO_0000022550" description="Transmembrane gamma-carboxyglutamic acid protein 3">
    <location>
        <begin position="20"/>
        <end position="231"/>
    </location>
</feature>
<feature type="topological domain" description="Extracellular" evidence="2">
    <location>
        <begin position="20"/>
        <end position="78"/>
    </location>
</feature>
<feature type="transmembrane region" description="Helical" evidence="2">
    <location>
        <begin position="79"/>
        <end position="101"/>
    </location>
</feature>
<feature type="topological domain" description="Cytoplasmic" evidence="2">
    <location>
        <begin position="102"/>
        <end position="231"/>
    </location>
</feature>
<feature type="domain" description="Gla" evidence="3">
    <location>
        <begin position="20"/>
        <end position="65"/>
    </location>
</feature>
<feature type="region of interest" description="Disordered" evidence="4">
    <location>
        <begin position="140"/>
        <end position="165"/>
    </location>
</feature>
<feature type="region of interest" description="Disordered" evidence="4">
    <location>
        <begin position="184"/>
        <end position="231"/>
    </location>
</feature>
<feature type="compositionally biased region" description="Polar residues" evidence="4">
    <location>
        <begin position="201"/>
        <end position="212"/>
    </location>
</feature>
<feature type="modified residue" description="4-carboxyglutamate" evidence="3">
    <location>
        <position position="22"/>
    </location>
</feature>
<feature type="modified residue" description="4-carboxyglutamate" evidence="3">
    <location>
        <position position="25"/>
    </location>
</feature>
<feature type="modified residue" description="4-carboxyglutamate" evidence="3">
    <location>
        <position position="26"/>
    </location>
</feature>
<feature type="modified residue" description="4-carboxyglutamate" evidence="3">
    <location>
        <position position="33"/>
    </location>
</feature>
<feature type="modified residue" description="4-carboxyglutamate" evidence="3">
    <location>
        <position position="35"/>
    </location>
</feature>
<feature type="modified residue" description="4-carboxyglutamate" evidence="3">
    <location>
        <position position="38"/>
    </location>
</feature>
<feature type="modified residue" description="4-carboxyglutamate" evidence="3">
    <location>
        <position position="39"/>
    </location>
</feature>
<feature type="modified residue" description="4-carboxyglutamate" evidence="3">
    <location>
        <position position="44"/>
    </location>
</feature>
<feature type="modified residue" description="4-carboxyglutamate" evidence="3">
    <location>
        <position position="45"/>
    </location>
</feature>
<feature type="modified residue" description="4-carboxyglutamate" evidence="3">
    <location>
        <position position="48"/>
    </location>
</feature>
<feature type="modified residue" description="4-carboxyglutamate" evidence="3">
    <location>
        <position position="51"/>
    </location>
</feature>
<feature type="modified residue" description="4-carboxyglutamate" evidence="3">
    <location>
        <position position="54"/>
    </location>
</feature>
<feature type="modified residue" description="4-carboxyglutamate" evidence="3">
    <location>
        <position position="58"/>
    </location>
</feature>
<feature type="disulfide bond" evidence="3">
    <location>
        <begin position="36"/>
        <end position="41"/>
    </location>
</feature>
<reference key="1">
    <citation type="journal article" date="2009" name="PLoS Biol.">
        <title>Lineage-specific biology revealed by a finished genome assembly of the mouse.</title>
        <authorList>
            <person name="Church D.M."/>
            <person name="Goodstadt L."/>
            <person name="Hillier L.W."/>
            <person name="Zody M.C."/>
            <person name="Goldstein S."/>
            <person name="She X."/>
            <person name="Bult C.J."/>
            <person name="Agarwala R."/>
            <person name="Cherry J.L."/>
            <person name="DiCuccio M."/>
            <person name="Hlavina W."/>
            <person name="Kapustin Y."/>
            <person name="Meric P."/>
            <person name="Maglott D."/>
            <person name="Birtle Z."/>
            <person name="Marques A.C."/>
            <person name="Graves T."/>
            <person name="Zhou S."/>
            <person name="Teague B."/>
            <person name="Potamousis K."/>
            <person name="Churas C."/>
            <person name="Place M."/>
            <person name="Herschleb J."/>
            <person name="Runnheim R."/>
            <person name="Forrest D."/>
            <person name="Amos-Landgraf J."/>
            <person name="Schwartz D.C."/>
            <person name="Cheng Z."/>
            <person name="Lindblad-Toh K."/>
            <person name="Eichler E.E."/>
            <person name="Ponting C.P."/>
        </authorList>
    </citation>
    <scope>NUCLEOTIDE SEQUENCE [LARGE SCALE GENOMIC DNA]</scope>
    <source>
        <strain>C57BL/6J</strain>
    </source>
</reference>
<reference key="2">
    <citation type="journal article" date="2004" name="Genome Res.">
        <title>The status, quality, and expansion of the NIH full-length cDNA project: the Mammalian Gene Collection (MGC).</title>
        <authorList>
            <consortium name="The MGC Project Team"/>
        </authorList>
    </citation>
    <scope>NUCLEOTIDE SEQUENCE [LARGE SCALE MRNA]</scope>
    <source>
        <strain>C57BL/6J</strain>
        <tissue>Brain</tissue>
    </source>
</reference>
<sequence>MAVFLEAKNAHAVLKRFPRANEFLEELRQGTIERECMEEICSYEEVKEVFENKEKTMEFWKGYPNAVYSVRDPSQSSDAMYVVVPLLGVVLLIVIALFIIWRCQLQKATRHHPSYAQNRYLASRAGHNLPRVMVYRGTVHSQGESSGHREAGNNPQIVMGPSRGGRTTVRLESTLYLPELSLSRLSSATPPPSYEEVTAPQEGSSEEASVSYSDPPPKYEEIVAASPSADK</sequence>
<gene>
    <name type="primary">Prrg3</name>
    <name type="synonym">Gm368</name>
    <name type="synonym">Tmg3</name>
</gene>
<proteinExistence type="evidence at transcript level"/>
<accession>Q6PAQ9</accession>
<accession>A3KGD9</accession>
<accession>B2RPV1</accession>
<protein>
    <recommendedName>
        <fullName>Transmembrane gamma-carboxyglutamic acid protein 3</fullName>
    </recommendedName>
    <alternativeName>
        <fullName>Proline-rich gamma-carboxyglutamic acid protein 3</fullName>
        <shortName>Proline-rich Gla protein 3</shortName>
    </alternativeName>
</protein>
<name>TMG3_MOUSE</name>
<organism>
    <name type="scientific">Mus musculus</name>
    <name type="common">Mouse</name>
    <dbReference type="NCBI Taxonomy" id="10090"/>
    <lineage>
        <taxon>Eukaryota</taxon>
        <taxon>Metazoa</taxon>
        <taxon>Chordata</taxon>
        <taxon>Craniata</taxon>
        <taxon>Vertebrata</taxon>
        <taxon>Euteleostomi</taxon>
        <taxon>Mammalia</taxon>
        <taxon>Eutheria</taxon>
        <taxon>Euarchontoglires</taxon>
        <taxon>Glires</taxon>
        <taxon>Rodentia</taxon>
        <taxon>Myomorpha</taxon>
        <taxon>Muroidea</taxon>
        <taxon>Muridae</taxon>
        <taxon>Murinae</taxon>
        <taxon>Mus</taxon>
        <taxon>Mus</taxon>
    </lineage>
</organism>
<comment type="subcellular location">
    <subcellularLocation>
        <location evidence="1">Membrane</location>
        <topology evidence="1">Single-pass type I membrane protein</topology>
    </subcellularLocation>
</comment>
<comment type="PTM">
    <text evidence="1">Gla residues are produced after subsequent post-translational modifications of glutamate by a vitamin K-dependent gamma-carboxylase.</text>
</comment>
<comment type="sequence caution" evidence="5">
    <conflict type="frameshift">
        <sequence resource="EMBL" id="BC060135"/>
    </conflict>
</comment>